<organism>
    <name type="scientific">Rattus norvegicus</name>
    <name type="common">Rat</name>
    <dbReference type="NCBI Taxonomy" id="10116"/>
    <lineage>
        <taxon>Eukaryota</taxon>
        <taxon>Metazoa</taxon>
        <taxon>Chordata</taxon>
        <taxon>Craniata</taxon>
        <taxon>Vertebrata</taxon>
        <taxon>Euteleostomi</taxon>
        <taxon>Mammalia</taxon>
        <taxon>Eutheria</taxon>
        <taxon>Euarchontoglires</taxon>
        <taxon>Glires</taxon>
        <taxon>Rodentia</taxon>
        <taxon>Myomorpha</taxon>
        <taxon>Muroidea</taxon>
        <taxon>Muridae</taxon>
        <taxon>Murinae</taxon>
        <taxon>Rattus</taxon>
    </lineage>
</organism>
<keyword id="KW-0256">Endoplasmic reticulum</keyword>
<keyword id="KW-0349">Heme</keyword>
<keyword id="KW-0408">Iron</keyword>
<keyword id="KW-0472">Membrane</keyword>
<keyword id="KW-0479">Metal-binding</keyword>
<keyword id="KW-0492">Microsome</keyword>
<keyword id="KW-0503">Monooxygenase</keyword>
<keyword id="KW-0560">Oxidoreductase</keyword>
<keyword id="KW-1185">Reference proteome</keyword>
<reference key="1">
    <citation type="journal article" date="1987" name="DNA">
        <title>Debrisoquine 4-hydroxylase: characterization of a new P450 gene subfamily, regulation, chromosomal mapping, and molecular analysis of the DA rat polymorphism.</title>
        <authorList>
            <person name="Gonzalez F.J."/>
            <person name="Matsunaga T."/>
            <person name="Nagata K."/>
            <person name="Meyer U.A."/>
            <person name="Nebert D.W."/>
            <person name="Pastewka J."/>
            <person name="Kozak C.A."/>
            <person name="Gillette J."/>
            <person name="Gelboin H.V."/>
            <person name="Hardwick J.P."/>
        </authorList>
    </citation>
    <scope>NUCLEOTIDE SEQUENCE [MRNA]</scope>
</reference>
<reference key="2">
    <citation type="journal article" date="1989" name="Biochemistry">
        <title>The CYP2D gene subfamily: analysis of the molecular basis of the debrisoquine 4-hydroxylase deficiency in DA rats.</title>
        <authorList>
            <person name="Matsunaga E."/>
            <person name="Zanger U.M."/>
            <person name="Hardwick J.P."/>
            <person name="Gelboin H.V."/>
            <person name="Meyer U.A."/>
            <person name="Gonzalez F.J."/>
        </authorList>
    </citation>
    <scope>NUCLEOTIDE SEQUENCE [MRNA]</scope>
</reference>
<reference key="3">
    <citation type="journal article" date="1988" name="Biochem. Biophys. Res. Commun.">
        <title>Four species of cDNAs for cytochrome P450 isozymes immunorelated to P450C-M/F encode for members of P450IID subfamily, increasing the number of members within the subfamily.</title>
        <authorList>
            <person name="Ishida N."/>
            <person name="Tawaragi Y."/>
            <person name="Inuzuka C."/>
            <person name="Sugita O."/>
            <person name="Kubota I."/>
            <person name="Nakazato H."/>
            <person name="Noguchi T."/>
            <person name="Sassa S."/>
        </authorList>
    </citation>
    <scope>NUCLEOTIDE SEQUENCE [MRNA]</scope>
</reference>
<reference key="4">
    <citation type="journal article" date="1997" name="Arch. Biochem. Biophys.">
        <title>Expression of four rat CYP2D isoforms in Saccharomyces cerevisiae and their catalytic specificity.</title>
        <authorList>
            <person name="Wan J."/>
            <person name="Imaoka S."/>
            <person name="Chow T."/>
            <person name="Hiroi T."/>
            <person name="Yabusaki Y."/>
            <person name="Funae Y."/>
        </authorList>
    </citation>
    <scope>NUCLEOTIDE SEQUENCE [MRNA]</scope>
    <source>
        <strain>Sprague-Dawley</strain>
        <tissue>Liver</tissue>
    </source>
</reference>
<reference key="5">
    <citation type="journal article" date="2004" name="Genome Res.">
        <title>The status, quality, and expansion of the NIH full-length cDNA project: the Mammalian Gene Collection (MGC).</title>
        <authorList>
            <consortium name="The MGC Project Team"/>
        </authorList>
    </citation>
    <scope>NUCLEOTIDE SEQUENCE [LARGE SCALE MRNA]</scope>
    <source>
        <tissue>Kidney</tissue>
    </source>
</reference>
<sequence>MELLNGTGLWSMAIFTVIFILLVDLMHRRHRWTSRYPPGPVPWPVLGNLLQVDLSNMPYSLYKLQHRYGDVFSLQKGWKPMVIVNRLKAVQEVLVTHGEDTADRPPVPIFKCLGVKPRSQGVILASYGPEWREQRRFSVSTLRTFGMGKKSLEEWVTKEAGHLCDAFTAQAGQSINPKAMLNKALCNVIASLIFARRFEYEDPYLIRMVKLVEESLTEVSGFIPEVLNTFPALLRIPGLADKVFQGQKTFMALLDNLLAENRTTWDPAQPPRNLTDAFLAEVEKAKGNPESSFNDENLRMVVVDLFTAGMVTTATTLTWALLLMILYPDVQRRVQQEIDEVIGQVRCPEMTDQAHMPYTNAVIHEVQRFGDIAPLNLPRFTSCDIEVQDFVIPKGTTLIINLSSVLKDETVWEKPHRFHPEHFLDAQGNFVKHEAFMPFSAGRRACLGEPLARMELFLFFTCLLQRFSFSVPVGQPRPSTHGFFAFPVAPLPYQLCAVVREQGL</sequence>
<name>CP2D1_RAT</name>
<comment type="function">
    <text>Cytochromes P450 are a group of heme-thiolate monooxygenases. In liver microsomes, this enzyme is involved in an NADPH-dependent electron transport pathway. It oxidizes a variety of structurally unrelated compounds, including steroids, fatty acids, and xenobiotics.</text>
</comment>
<comment type="catalytic activity">
    <reaction>
        <text>an organic molecule + reduced [NADPH--hemoprotein reductase] + O2 = an alcohol + oxidized [NADPH--hemoprotein reductase] + H2O + H(+)</text>
        <dbReference type="Rhea" id="RHEA:17149"/>
        <dbReference type="Rhea" id="RHEA-COMP:11964"/>
        <dbReference type="Rhea" id="RHEA-COMP:11965"/>
        <dbReference type="ChEBI" id="CHEBI:15377"/>
        <dbReference type="ChEBI" id="CHEBI:15378"/>
        <dbReference type="ChEBI" id="CHEBI:15379"/>
        <dbReference type="ChEBI" id="CHEBI:30879"/>
        <dbReference type="ChEBI" id="CHEBI:57618"/>
        <dbReference type="ChEBI" id="CHEBI:58210"/>
        <dbReference type="ChEBI" id="CHEBI:142491"/>
        <dbReference type="EC" id="1.14.14.1"/>
    </reaction>
</comment>
<comment type="cofactor">
    <cofactor evidence="1">
        <name>heme</name>
        <dbReference type="ChEBI" id="CHEBI:30413"/>
    </cofactor>
</comment>
<comment type="subcellular location">
    <subcellularLocation>
        <location>Endoplasmic reticulum membrane</location>
        <topology>Peripheral membrane protein</topology>
    </subcellularLocation>
    <subcellularLocation>
        <location>Microsome membrane</location>
        <topology>Peripheral membrane protein</topology>
    </subcellularLocation>
</comment>
<comment type="induction">
    <text>P450 can be induced to high levels in liver and other tissues by various foreign compounds, including drugs, pesticides, and carcinogens.</text>
</comment>
<comment type="similarity">
    <text evidence="2">Belongs to the cytochrome P450 family.</text>
</comment>
<feature type="chain" id="PRO_0000051728" description="Cytochrome P450 2D1">
    <location>
        <begin position="1"/>
        <end position="504"/>
    </location>
</feature>
<feature type="binding site" description="axial binding residue">
    <location>
        <position position="446"/>
    </location>
    <ligand>
        <name>heme</name>
        <dbReference type="ChEBI" id="CHEBI:30413"/>
    </ligand>
    <ligandPart>
        <name>Fe</name>
        <dbReference type="ChEBI" id="CHEBI:18248"/>
    </ligandPart>
</feature>
<feature type="sequence conflict" description="In Ref. 3; AAA41043." evidence="2" ref="3">
    <original>IL</original>
    <variation>VF</variation>
    <location>
        <begin position="123"/>
        <end position="124"/>
    </location>
</feature>
<feature type="sequence conflict" description="In Ref. 3; AAA41043." evidence="2" ref="3">
    <original>Q</original>
    <variation>R</variation>
    <location>
        <position position="173"/>
    </location>
</feature>
<feature type="sequence conflict" description="In Ref. 3; AAA41043, 4; BAA23122 and 5; AAH78696." evidence="2" ref="3 4 5">
    <original>F</original>
    <variation>I</variation>
    <location>
        <position position="380"/>
    </location>
</feature>
<protein>
    <recommendedName>
        <fullName>Cytochrome P450 2D1</fullName>
        <ecNumber>1.14.14.1</ecNumber>
    </recommendedName>
    <alternativeName>
        <fullName>CYPIID1</fullName>
    </alternativeName>
    <alternativeName>
        <fullName>Cytochrome P450-CMF1A</fullName>
    </alternativeName>
    <alternativeName>
        <fullName>Cytochrome P450-DB1</fullName>
    </alternativeName>
    <alternativeName>
        <fullName>Cytochrome P450-UT-7</fullName>
    </alternativeName>
    <alternativeName>
        <fullName>Debrisoquine 4-hydroxylase</fullName>
    </alternativeName>
</protein>
<dbReference type="EC" id="1.14.14.1"/>
<dbReference type="EMBL" id="M16654">
    <property type="protein sequence ID" value="AAA41054.1"/>
    <property type="molecule type" value="mRNA"/>
</dbReference>
<dbReference type="EMBL" id="J02867">
    <property type="protein sequence ID" value="AAA41001.1"/>
    <property type="molecule type" value="mRNA"/>
</dbReference>
<dbReference type="EMBL" id="M22328">
    <property type="protein sequence ID" value="AAA41043.1"/>
    <property type="molecule type" value="mRNA"/>
</dbReference>
<dbReference type="EMBL" id="AB008422">
    <property type="protein sequence ID" value="BAA23122.1"/>
    <property type="molecule type" value="mRNA"/>
</dbReference>
<dbReference type="EMBL" id="BC078696">
    <property type="protein sequence ID" value="AAH78696.1"/>
    <property type="molecule type" value="mRNA"/>
</dbReference>
<dbReference type="PIR" id="A26822">
    <property type="entry name" value="A26822"/>
</dbReference>
<dbReference type="RefSeq" id="NP_695225.1">
    <property type="nucleotide sequence ID" value="NM_153313.1"/>
</dbReference>
<dbReference type="SMR" id="P10633"/>
<dbReference type="FunCoup" id="P10633">
    <property type="interactions" value="51"/>
</dbReference>
<dbReference type="IntAct" id="P10633">
    <property type="interactions" value="1"/>
</dbReference>
<dbReference type="BindingDB" id="P10633"/>
<dbReference type="ChEMBL" id="CHEMBL2475"/>
<dbReference type="iPTMnet" id="P10633"/>
<dbReference type="PhosphoSitePlus" id="P10633"/>
<dbReference type="PaxDb" id="10116-ENSRNOP00000041174"/>
<dbReference type="GeneID" id="266684"/>
<dbReference type="KEGG" id="rno:266684"/>
<dbReference type="UCSC" id="RGD:708427">
    <property type="organism name" value="rat"/>
</dbReference>
<dbReference type="AGR" id="RGD:708427"/>
<dbReference type="CTD" id="266684"/>
<dbReference type="RGD" id="708427">
    <property type="gene designation" value="Cyp2d1"/>
</dbReference>
<dbReference type="eggNOG" id="KOG0156">
    <property type="taxonomic scope" value="Eukaryota"/>
</dbReference>
<dbReference type="InParanoid" id="P10633"/>
<dbReference type="OrthoDB" id="47901at9989"/>
<dbReference type="PhylomeDB" id="P10633"/>
<dbReference type="TreeFam" id="TF352043"/>
<dbReference type="SABIO-RK" id="P10633"/>
<dbReference type="PRO" id="PR:P10633"/>
<dbReference type="Proteomes" id="UP000002494">
    <property type="component" value="Unplaced"/>
</dbReference>
<dbReference type="GO" id="GO:0005737">
    <property type="term" value="C:cytoplasm"/>
    <property type="evidence" value="ECO:0000266"/>
    <property type="project" value="RGD"/>
</dbReference>
<dbReference type="GO" id="GO:0005789">
    <property type="term" value="C:endoplasmic reticulum membrane"/>
    <property type="evidence" value="ECO:0007669"/>
    <property type="project" value="UniProtKB-SubCell"/>
</dbReference>
<dbReference type="GO" id="GO:0043231">
    <property type="term" value="C:intracellular membrane-bounded organelle"/>
    <property type="evidence" value="ECO:0000318"/>
    <property type="project" value="GO_Central"/>
</dbReference>
<dbReference type="GO" id="GO:0005739">
    <property type="term" value="C:mitochondrion"/>
    <property type="evidence" value="ECO:0000266"/>
    <property type="project" value="RGD"/>
</dbReference>
<dbReference type="GO" id="GO:0070330">
    <property type="term" value="F:aromatase activity"/>
    <property type="evidence" value="ECO:0000266"/>
    <property type="project" value="RGD"/>
</dbReference>
<dbReference type="GO" id="GO:0020037">
    <property type="term" value="F:heme binding"/>
    <property type="evidence" value="ECO:0000318"/>
    <property type="project" value="GO_Central"/>
</dbReference>
<dbReference type="GO" id="GO:0005506">
    <property type="term" value="F:iron ion binding"/>
    <property type="evidence" value="ECO:0007669"/>
    <property type="project" value="InterPro"/>
</dbReference>
<dbReference type="GO" id="GO:0004497">
    <property type="term" value="F:monooxygenase activity"/>
    <property type="evidence" value="ECO:0000314"/>
    <property type="project" value="RGD"/>
</dbReference>
<dbReference type="GO" id="GO:0016712">
    <property type="term" value="F:oxidoreductase activity, acting on paired donors, with incorporation or reduction of molecular oxygen, reduced flavin or flavoprotein as one donor, and incorporation of one atom of oxygen"/>
    <property type="evidence" value="ECO:0000318"/>
    <property type="project" value="GO_Central"/>
</dbReference>
<dbReference type="GO" id="GO:0019369">
    <property type="term" value="P:arachidonate metabolic process"/>
    <property type="evidence" value="ECO:0000318"/>
    <property type="project" value="GO_Central"/>
</dbReference>
<dbReference type="GO" id="GO:0035094">
    <property type="term" value="P:response to nicotine"/>
    <property type="evidence" value="ECO:0000270"/>
    <property type="project" value="RGD"/>
</dbReference>
<dbReference type="GO" id="GO:0009410">
    <property type="term" value="P:response to xenobiotic stimulus"/>
    <property type="evidence" value="ECO:0000314"/>
    <property type="project" value="RGD"/>
</dbReference>
<dbReference type="GO" id="GO:0042178">
    <property type="term" value="P:xenobiotic catabolic process"/>
    <property type="evidence" value="ECO:0000266"/>
    <property type="project" value="RGD"/>
</dbReference>
<dbReference type="GO" id="GO:0006805">
    <property type="term" value="P:xenobiotic metabolic process"/>
    <property type="evidence" value="ECO:0000266"/>
    <property type="project" value="RGD"/>
</dbReference>
<dbReference type="CDD" id="cd20663">
    <property type="entry name" value="CYP2D"/>
    <property type="match status" value="1"/>
</dbReference>
<dbReference type="FunFam" id="1.10.630.10:FF:000004">
    <property type="entry name" value="cytochrome P450 2D15 isoform X1"/>
    <property type="match status" value="1"/>
</dbReference>
<dbReference type="Gene3D" id="1.10.630.10">
    <property type="entry name" value="Cytochrome P450"/>
    <property type="match status" value="1"/>
</dbReference>
<dbReference type="InterPro" id="IPR001128">
    <property type="entry name" value="Cyt_P450"/>
</dbReference>
<dbReference type="InterPro" id="IPR017972">
    <property type="entry name" value="Cyt_P450_CS"/>
</dbReference>
<dbReference type="InterPro" id="IPR002401">
    <property type="entry name" value="Cyt_P450_E_grp-I"/>
</dbReference>
<dbReference type="InterPro" id="IPR008069">
    <property type="entry name" value="Cyt_P450_E_grp-I_CYP2D-like"/>
</dbReference>
<dbReference type="InterPro" id="IPR036396">
    <property type="entry name" value="Cyt_P450_sf"/>
</dbReference>
<dbReference type="InterPro" id="IPR050182">
    <property type="entry name" value="Cytochrome_P450_fam2"/>
</dbReference>
<dbReference type="PANTHER" id="PTHR24300">
    <property type="entry name" value="CYTOCHROME P450 508A4-RELATED"/>
    <property type="match status" value="1"/>
</dbReference>
<dbReference type="PANTHER" id="PTHR24300:SF119">
    <property type="entry name" value="CYTOCHROME P450-RELATED"/>
    <property type="match status" value="1"/>
</dbReference>
<dbReference type="Pfam" id="PF00067">
    <property type="entry name" value="p450"/>
    <property type="match status" value="1"/>
</dbReference>
<dbReference type="PRINTS" id="PR00463">
    <property type="entry name" value="EP450I"/>
</dbReference>
<dbReference type="PRINTS" id="PR01686">
    <property type="entry name" value="EP450ICYP2D"/>
</dbReference>
<dbReference type="PRINTS" id="PR00385">
    <property type="entry name" value="P450"/>
</dbReference>
<dbReference type="SUPFAM" id="SSF48264">
    <property type="entry name" value="Cytochrome P450"/>
    <property type="match status" value="1"/>
</dbReference>
<dbReference type="PROSITE" id="PS00086">
    <property type="entry name" value="CYTOCHROME_P450"/>
    <property type="match status" value="1"/>
</dbReference>
<evidence type="ECO:0000250" key="1"/>
<evidence type="ECO:0000305" key="2"/>
<proteinExistence type="evidence at transcript level"/>
<accession>P10633</accession>
<accession>O35105</accession>
<accession>Q6AZ78</accession>
<gene>
    <name type="primary">Cyp2d1</name>
    <name type="synonym">Cyp2d-1</name>
    <name type="synonym">Cyp2d9</name>
</gene>